<reference key="1">
    <citation type="journal article" date="2002" name="Biol. Reprod.">
        <title>SAMP32, a testis-specific, isoantigenic sperm acrosomal membrane-associated protein.</title>
        <authorList>
            <person name="Hao Z."/>
            <person name="Wolkowicz M.J."/>
            <person name="Shetty J."/>
            <person name="Klotz K."/>
            <person name="Bolling L."/>
            <person name="Sen B."/>
            <person name="Westbrook V.A."/>
            <person name="Coonrod S."/>
            <person name="Flickinger C.J."/>
            <person name="Herr J.C."/>
        </authorList>
    </citation>
    <scope>NUCLEOTIDE SEQUENCE [MRNA]</scope>
    <scope>PROTEIN SEQUENCE OF 255-268</scope>
    <scope>FUNCTION</scope>
    <scope>SUBCELLULAR LOCATION</scope>
    <scope>PHOSPHORYLATION AT SER-256</scope>
    <scope>TISSUE SPECIFICITY</scope>
    <scope>IDENTIFICATION BY MASS SPECTROMETRY</scope>
    <source>
        <tissue>Testis</tissue>
    </source>
</reference>
<reference key="2">
    <citation type="journal article" date="2003" name="Nature">
        <title>The DNA sequence and analysis of human chromosome 6.</title>
        <authorList>
            <person name="Mungall A.J."/>
            <person name="Palmer S.A."/>
            <person name="Sims S.K."/>
            <person name="Edwards C.A."/>
            <person name="Ashurst J.L."/>
            <person name="Wilming L."/>
            <person name="Jones M.C."/>
            <person name="Horton R."/>
            <person name="Hunt S.E."/>
            <person name="Scott C.E."/>
            <person name="Gilbert J.G.R."/>
            <person name="Clamp M.E."/>
            <person name="Bethel G."/>
            <person name="Milne S."/>
            <person name="Ainscough R."/>
            <person name="Almeida J.P."/>
            <person name="Ambrose K.D."/>
            <person name="Andrews T.D."/>
            <person name="Ashwell R.I.S."/>
            <person name="Babbage A.K."/>
            <person name="Bagguley C.L."/>
            <person name="Bailey J."/>
            <person name="Banerjee R."/>
            <person name="Barker D.J."/>
            <person name="Barlow K.F."/>
            <person name="Bates K."/>
            <person name="Beare D.M."/>
            <person name="Beasley H."/>
            <person name="Beasley O."/>
            <person name="Bird C.P."/>
            <person name="Blakey S.E."/>
            <person name="Bray-Allen S."/>
            <person name="Brook J."/>
            <person name="Brown A.J."/>
            <person name="Brown J.Y."/>
            <person name="Burford D.C."/>
            <person name="Burrill W."/>
            <person name="Burton J."/>
            <person name="Carder C."/>
            <person name="Carter N.P."/>
            <person name="Chapman J.C."/>
            <person name="Clark S.Y."/>
            <person name="Clark G."/>
            <person name="Clee C.M."/>
            <person name="Clegg S."/>
            <person name="Cobley V."/>
            <person name="Collier R.E."/>
            <person name="Collins J.E."/>
            <person name="Colman L.K."/>
            <person name="Corby N.R."/>
            <person name="Coville G.J."/>
            <person name="Culley K.M."/>
            <person name="Dhami P."/>
            <person name="Davies J."/>
            <person name="Dunn M."/>
            <person name="Earthrowl M.E."/>
            <person name="Ellington A.E."/>
            <person name="Evans K.A."/>
            <person name="Faulkner L."/>
            <person name="Francis M.D."/>
            <person name="Frankish A."/>
            <person name="Frankland J."/>
            <person name="French L."/>
            <person name="Garner P."/>
            <person name="Garnett J."/>
            <person name="Ghori M.J."/>
            <person name="Gilby L.M."/>
            <person name="Gillson C.J."/>
            <person name="Glithero R.J."/>
            <person name="Grafham D.V."/>
            <person name="Grant M."/>
            <person name="Gribble S."/>
            <person name="Griffiths C."/>
            <person name="Griffiths M.N.D."/>
            <person name="Hall R."/>
            <person name="Halls K.S."/>
            <person name="Hammond S."/>
            <person name="Harley J.L."/>
            <person name="Hart E.A."/>
            <person name="Heath P.D."/>
            <person name="Heathcott R."/>
            <person name="Holmes S.J."/>
            <person name="Howden P.J."/>
            <person name="Howe K.L."/>
            <person name="Howell G.R."/>
            <person name="Huckle E."/>
            <person name="Humphray S.J."/>
            <person name="Humphries M.D."/>
            <person name="Hunt A.R."/>
            <person name="Johnson C.M."/>
            <person name="Joy A.A."/>
            <person name="Kay M."/>
            <person name="Keenan S.J."/>
            <person name="Kimberley A.M."/>
            <person name="King A."/>
            <person name="Laird G.K."/>
            <person name="Langford C."/>
            <person name="Lawlor S."/>
            <person name="Leongamornlert D.A."/>
            <person name="Leversha M."/>
            <person name="Lloyd C.R."/>
            <person name="Lloyd D.M."/>
            <person name="Loveland J.E."/>
            <person name="Lovell J."/>
            <person name="Martin S."/>
            <person name="Mashreghi-Mohammadi M."/>
            <person name="Maslen G.L."/>
            <person name="Matthews L."/>
            <person name="McCann O.T."/>
            <person name="McLaren S.J."/>
            <person name="McLay K."/>
            <person name="McMurray A."/>
            <person name="Moore M.J.F."/>
            <person name="Mullikin J.C."/>
            <person name="Niblett D."/>
            <person name="Nickerson T."/>
            <person name="Novik K.L."/>
            <person name="Oliver K."/>
            <person name="Overton-Larty E.K."/>
            <person name="Parker A."/>
            <person name="Patel R."/>
            <person name="Pearce A.V."/>
            <person name="Peck A.I."/>
            <person name="Phillimore B.J.C.T."/>
            <person name="Phillips S."/>
            <person name="Plumb R.W."/>
            <person name="Porter K.M."/>
            <person name="Ramsey Y."/>
            <person name="Ranby S.A."/>
            <person name="Rice C.M."/>
            <person name="Ross M.T."/>
            <person name="Searle S.M."/>
            <person name="Sehra H.K."/>
            <person name="Sheridan E."/>
            <person name="Skuce C.D."/>
            <person name="Smith S."/>
            <person name="Smith M."/>
            <person name="Spraggon L."/>
            <person name="Squares S.L."/>
            <person name="Steward C.A."/>
            <person name="Sycamore N."/>
            <person name="Tamlyn-Hall G."/>
            <person name="Tester J."/>
            <person name="Theaker A.J."/>
            <person name="Thomas D.W."/>
            <person name="Thorpe A."/>
            <person name="Tracey A."/>
            <person name="Tromans A."/>
            <person name="Tubby B."/>
            <person name="Wall M."/>
            <person name="Wallis J.M."/>
            <person name="West A.P."/>
            <person name="White S.S."/>
            <person name="Whitehead S.L."/>
            <person name="Whittaker H."/>
            <person name="Wild A."/>
            <person name="Willey D.J."/>
            <person name="Wilmer T.E."/>
            <person name="Wood J.M."/>
            <person name="Wray P.W."/>
            <person name="Wyatt J.C."/>
            <person name="Young L."/>
            <person name="Younger R.M."/>
            <person name="Bentley D.R."/>
            <person name="Coulson A."/>
            <person name="Durbin R.M."/>
            <person name="Hubbard T."/>
            <person name="Sulston J.E."/>
            <person name="Dunham I."/>
            <person name="Rogers J."/>
            <person name="Beck S."/>
        </authorList>
    </citation>
    <scope>NUCLEOTIDE SEQUENCE [LARGE SCALE GENOMIC DNA]</scope>
</reference>
<reference key="3">
    <citation type="journal article" date="2004" name="Genome Res.">
        <title>The status, quality, and expansion of the NIH full-length cDNA project: the Mammalian Gene Collection (MGC).</title>
        <authorList>
            <consortium name="The MGC Project Team"/>
        </authorList>
    </citation>
    <scope>NUCLEOTIDE SEQUENCE [LARGE SCALE MRNA]</scope>
    <source>
        <tissue>Testis</tissue>
    </source>
</reference>
<reference key="4">
    <citation type="journal article" date="2024" name="Elife">
        <title>Disruption in CYLC1 leads to acrosome detachment, sperm head deformity, and male in/subfertility in humans and mice.</title>
        <authorList>
            <person name="Jin H.J."/>
            <person name="Fan Y."/>
            <person name="Yang X."/>
            <person name="Dong Y."/>
            <person name="Zhang X.Z."/>
            <person name="Geng X.Y."/>
            <person name="Yan Z."/>
            <person name="Wu L."/>
            <person name="Ma M."/>
            <person name="Li B."/>
            <person name="Lyu Q."/>
            <person name="Pan Y."/>
            <person name="Liu M."/>
            <person name="Kuang Y."/>
            <person name="Chen S.R."/>
        </authorList>
    </citation>
    <scope>INTERACTION WITH CYLC1</scope>
</reference>
<reference key="5">
    <citation type="journal article" date="2021" name="Hum. Reprod.">
        <title>Loss of SPACA1 function causes autosomal recessive globozoospermia by damaging the acrosome-acroplaxome complex.</title>
        <authorList>
            <person name="Chen P."/>
            <person name="Saiyin H."/>
            <person name="Shi R."/>
            <person name="Liu B."/>
            <person name="Han X."/>
            <person name="Gao Y."/>
            <person name="Ye X."/>
            <person name="Zhang X."/>
            <person name="Sun Y."/>
        </authorList>
    </citation>
    <scope>VARIANT SPGF85 18-TRP--GLU-294 DEL</scope>
    <scope>CHARACTERIZATION OF VARIANT SPGF85 18-TRP--GLU-294 DEL</scope>
    <scope>INVOLVEMENT IN SPGF85</scope>
    <scope>FUNCTION</scope>
</reference>
<dbReference type="EMBL" id="AF203447">
    <property type="protein sequence ID" value="AAG31422.1"/>
    <property type="molecule type" value="mRNA"/>
</dbReference>
<dbReference type="EMBL" id="AL136096">
    <property type="status" value="NOT_ANNOTATED_CDS"/>
    <property type="molecule type" value="Genomic_DNA"/>
</dbReference>
<dbReference type="EMBL" id="BC029488">
    <property type="protein sequence ID" value="AAH29488.1"/>
    <property type="molecule type" value="mRNA"/>
</dbReference>
<dbReference type="CCDS" id="CCDS5014.1"/>
<dbReference type="RefSeq" id="NP_112222.1">
    <property type="nucleotide sequence ID" value="NM_030960.3"/>
</dbReference>
<dbReference type="BioGRID" id="123591">
    <property type="interactions" value="116"/>
</dbReference>
<dbReference type="FunCoup" id="Q9HBV2">
    <property type="interactions" value="129"/>
</dbReference>
<dbReference type="IntAct" id="Q9HBV2">
    <property type="interactions" value="94"/>
</dbReference>
<dbReference type="MINT" id="Q9HBV2"/>
<dbReference type="STRING" id="9606.ENSP00000237201"/>
<dbReference type="GlyCosmos" id="Q9HBV2">
    <property type="glycosylation" value="1 site, No reported glycans"/>
</dbReference>
<dbReference type="GlyGen" id="Q9HBV2">
    <property type="glycosylation" value="1 site"/>
</dbReference>
<dbReference type="iPTMnet" id="Q9HBV2"/>
<dbReference type="PhosphoSitePlus" id="Q9HBV2"/>
<dbReference type="BioMuta" id="SPACA1"/>
<dbReference type="DMDM" id="74752784"/>
<dbReference type="MassIVE" id="Q9HBV2"/>
<dbReference type="PaxDb" id="9606-ENSP00000237201"/>
<dbReference type="PeptideAtlas" id="Q9HBV2"/>
<dbReference type="ProteomicsDB" id="81599"/>
<dbReference type="Antibodypedia" id="18684">
    <property type="antibodies" value="121 antibodies from 21 providers"/>
</dbReference>
<dbReference type="DNASU" id="81833"/>
<dbReference type="Ensembl" id="ENST00000237201.2">
    <property type="protein sequence ID" value="ENSP00000237201.1"/>
    <property type="gene ID" value="ENSG00000118434.9"/>
</dbReference>
<dbReference type="GeneID" id="81833"/>
<dbReference type="KEGG" id="hsa:81833"/>
<dbReference type="MANE-Select" id="ENST00000237201.2">
    <property type="protein sequence ID" value="ENSP00000237201.1"/>
    <property type="RefSeq nucleotide sequence ID" value="NM_030960.3"/>
    <property type="RefSeq protein sequence ID" value="NP_112222.1"/>
</dbReference>
<dbReference type="UCSC" id="uc003pmn.3">
    <property type="organism name" value="human"/>
</dbReference>
<dbReference type="AGR" id="HGNC:14967"/>
<dbReference type="CTD" id="81833"/>
<dbReference type="GeneCards" id="SPACA1"/>
<dbReference type="HGNC" id="HGNC:14967">
    <property type="gene designation" value="SPACA1"/>
</dbReference>
<dbReference type="HPA" id="ENSG00000118434">
    <property type="expression patterns" value="Tissue enriched (testis)"/>
</dbReference>
<dbReference type="MalaCards" id="SPACA1"/>
<dbReference type="MIM" id="612739">
    <property type="type" value="gene"/>
</dbReference>
<dbReference type="MIM" id="620490">
    <property type="type" value="phenotype"/>
</dbReference>
<dbReference type="neXtProt" id="NX_Q9HBV2"/>
<dbReference type="OpenTargets" id="ENSG00000118434"/>
<dbReference type="PharmGKB" id="PA37943"/>
<dbReference type="VEuPathDB" id="HostDB:ENSG00000118434"/>
<dbReference type="eggNOG" id="ENOG502S339">
    <property type="taxonomic scope" value="Eukaryota"/>
</dbReference>
<dbReference type="GeneTree" id="ENSGT00390000004211"/>
<dbReference type="HOGENOM" id="CLU_080745_0_0_1"/>
<dbReference type="InParanoid" id="Q9HBV2"/>
<dbReference type="OMA" id="FIIVNWA"/>
<dbReference type="OrthoDB" id="9448631at2759"/>
<dbReference type="PAN-GO" id="Q9HBV2">
    <property type="GO annotations" value="2 GO annotations based on evolutionary models"/>
</dbReference>
<dbReference type="PhylomeDB" id="Q9HBV2"/>
<dbReference type="TreeFam" id="TF336918"/>
<dbReference type="PathwayCommons" id="Q9HBV2"/>
<dbReference type="SignaLink" id="Q9HBV2"/>
<dbReference type="BioGRID-ORCS" id="81833">
    <property type="hits" value="9 hits in 1136 CRISPR screens"/>
</dbReference>
<dbReference type="ChiTaRS" id="SPACA1">
    <property type="organism name" value="human"/>
</dbReference>
<dbReference type="GenomeRNAi" id="81833"/>
<dbReference type="Pharos" id="Q9HBV2">
    <property type="development level" value="Tbio"/>
</dbReference>
<dbReference type="PRO" id="PR:Q9HBV2"/>
<dbReference type="Proteomes" id="UP000005640">
    <property type="component" value="Chromosome 6"/>
</dbReference>
<dbReference type="RNAct" id="Q9HBV2">
    <property type="molecule type" value="protein"/>
</dbReference>
<dbReference type="Bgee" id="ENSG00000118434">
    <property type="expression patterns" value="Expressed in left testis and 29 other cell types or tissues"/>
</dbReference>
<dbReference type="GO" id="GO:0002080">
    <property type="term" value="C:acrosomal membrane"/>
    <property type="evidence" value="ECO:0000318"/>
    <property type="project" value="GO_Central"/>
</dbReference>
<dbReference type="GO" id="GO:0002079">
    <property type="term" value="C:inner acrosomal membrane"/>
    <property type="evidence" value="ECO:0007669"/>
    <property type="project" value="UniProtKB-SubCell"/>
</dbReference>
<dbReference type="GO" id="GO:0001675">
    <property type="term" value="P:acrosome assembly"/>
    <property type="evidence" value="ECO:0000318"/>
    <property type="project" value="GO_Central"/>
</dbReference>
<dbReference type="CDD" id="cd13783">
    <property type="entry name" value="SPACA1"/>
    <property type="match status" value="1"/>
</dbReference>
<dbReference type="InterPro" id="IPR037878">
    <property type="entry name" value="SPACA1"/>
</dbReference>
<dbReference type="PANTHER" id="PTHR47223">
    <property type="entry name" value="SPERM ACROSOME MEMBRANE-ASSOCIATED PROTEIN 1"/>
    <property type="match status" value="1"/>
</dbReference>
<dbReference type="PANTHER" id="PTHR47223:SF1">
    <property type="entry name" value="SPERM ACROSOME MEMBRANE-ASSOCIATED PROTEIN 1"/>
    <property type="match status" value="1"/>
</dbReference>
<name>SACA1_HUMAN</name>
<gene>
    <name type="primary">SPACA1</name>
    <name type="synonym">SAMP32</name>
</gene>
<comment type="function">
    <text evidence="5 6">Plays a role in acrosome formation and establishment of normal sperm morphology during spermatogenesis (PubMed:34172998). Important for male fertility (PubMed:11870081).</text>
</comment>
<comment type="subunit">
    <text evidence="7">Interacts with CYLC1; the interaction may be relevant for proper acrosome attachment to the nuclear envelope.</text>
</comment>
<comment type="interaction">
    <interactant intactId="EBI-17498703">
        <id>Q9HBV2</id>
    </interactant>
    <interactant intactId="EBI-1754287">
        <id>Q9NRZ5</id>
        <label>AGPAT4</label>
    </interactant>
    <organismsDiffer>false</organismsDiffer>
    <experiments>3</experiments>
</comment>
<comment type="interaction">
    <interactant intactId="EBI-17498703">
        <id>Q9HBV2</id>
    </interactant>
    <interactant intactId="EBI-3904417">
        <id>Q99437</id>
        <label>ATP6V0B</label>
    </interactant>
    <organismsDiffer>false</organismsDiffer>
    <experiments>3</experiments>
</comment>
<comment type="interaction">
    <interactant intactId="EBI-17498703">
        <id>Q9HBV2</id>
    </interactant>
    <interactant intactId="EBI-721179">
        <id>P27449</id>
        <label>ATP6V0C</label>
    </interactant>
    <organismsDiffer>false</organismsDiffer>
    <experiments>3</experiments>
</comment>
<comment type="interaction">
    <interactant intactId="EBI-17498703">
        <id>Q9HBV2</id>
    </interactant>
    <interactant intactId="EBI-749464">
        <id>Q12983</id>
        <label>BNIP3</label>
    </interactant>
    <organismsDiffer>false</organismsDiffer>
    <experiments>3</experiments>
</comment>
<comment type="interaction">
    <interactant intactId="EBI-17498703">
        <id>Q9HBV2</id>
    </interactant>
    <interactant intactId="EBI-17499011">
        <id>P62955</id>
        <label>CACNG7</label>
    </interactant>
    <organismsDiffer>false</organismsDiffer>
    <experiments>3</experiments>
</comment>
<comment type="interaction">
    <interactant intactId="EBI-17498703">
        <id>Q9HBV2</id>
    </interactant>
    <interactant intactId="EBI-307924">
        <id>P21854</id>
        <label>CD72</label>
    </interactant>
    <organismsDiffer>false</organismsDiffer>
    <experiments>3</experiments>
</comment>
<comment type="interaction">
    <interactant intactId="EBI-17498703">
        <id>Q9HBV2</id>
    </interactant>
    <interactant intactId="EBI-12256978">
        <id>Q8N6F1-2</id>
        <label>CLDN19</label>
    </interactant>
    <organismsDiffer>false</organismsDiffer>
    <experiments>3</experiments>
</comment>
<comment type="interaction">
    <interactant intactId="EBI-17498703">
        <id>Q9HBV2</id>
    </interactant>
    <interactant intactId="EBI-12019274">
        <id>Q4LDR2</id>
        <label>CTXN3</label>
    </interactant>
    <organismsDiffer>false</organismsDiffer>
    <experiments>3</experiments>
</comment>
<comment type="interaction">
    <interactant intactId="EBI-17498703">
        <id>Q9HBV2</id>
    </interactant>
    <interactant intactId="EBI-4319440">
        <id>P54849</id>
        <label>EMP1</label>
    </interactant>
    <organismsDiffer>false</organismsDiffer>
    <experiments>3</experiments>
</comment>
<comment type="interaction">
    <interactant intactId="EBI-17498703">
        <id>Q9HBV2</id>
    </interactant>
    <interactant intactId="EBI-3907816">
        <id>P54852</id>
        <label>EMP3</label>
    </interactant>
    <organismsDiffer>false</organismsDiffer>
    <experiments>3</experiments>
</comment>
<comment type="interaction">
    <interactant intactId="EBI-17498703">
        <id>Q9HBV2</id>
    </interactant>
    <interactant intactId="EBI-6166686">
        <id>Q96F15</id>
        <label>GIMAP5</label>
    </interactant>
    <organismsDiffer>false</organismsDiffer>
    <experiments>3</experiments>
</comment>
<comment type="interaction">
    <interactant intactId="EBI-17498703">
        <id>Q9HBV2</id>
    </interactant>
    <interactant intactId="EBI-10264855">
        <id>Q8N112</id>
        <label>LSMEM2</label>
    </interactant>
    <organismsDiffer>false</organismsDiffer>
    <experiments>3</experiments>
</comment>
<comment type="interaction">
    <interactant intactId="EBI-17498703">
        <id>Q9HBV2</id>
    </interactant>
    <interactant intactId="EBI-10264528">
        <id>Q8IZ57</id>
        <label>NRSN1</label>
    </interactant>
    <organismsDiffer>false</organismsDiffer>
    <experiments>3</experiments>
</comment>
<comment type="interaction">
    <interactant intactId="EBI-17498703">
        <id>Q9HBV2</id>
    </interactant>
    <interactant intactId="EBI-6380741">
        <id>P42857</id>
        <label>NSG1</label>
    </interactant>
    <organismsDiffer>false</organismsDiffer>
    <experiments>3</experiments>
</comment>
<comment type="interaction">
    <interactant intactId="EBI-17498703">
        <id>Q9HBV2</id>
    </interactant>
    <interactant intactId="EBI-692836">
        <id>P26678</id>
        <label>PLN</label>
    </interactant>
    <organismsDiffer>false</organismsDiffer>
    <experiments>3</experiments>
</comment>
<comment type="interaction">
    <interactant intactId="EBI-17498703">
        <id>Q9HBV2</id>
    </interactant>
    <interactant intactId="EBI-2845982">
        <id>Q01453</id>
        <label>PMP22</label>
    </interactant>
    <organismsDiffer>false</organismsDiffer>
    <experiments>3</experiments>
</comment>
<comment type="interaction">
    <interactant intactId="EBI-17498703">
        <id>Q9HBV2</id>
    </interactant>
    <interactant intactId="EBI-1052363">
        <id>Q9NS64</id>
        <label>RPRM</label>
    </interactant>
    <organismsDiffer>false</organismsDiffer>
    <experiments>3</experiments>
</comment>
<comment type="interaction">
    <interactant intactId="EBI-17498703">
        <id>Q9HBV2</id>
    </interactant>
    <interactant intactId="EBI-749270">
        <id>Q8N6R1</id>
        <label>SERP2</label>
    </interactant>
    <organismsDiffer>false</organismsDiffer>
    <experiments>3</experiments>
</comment>
<comment type="interaction">
    <interactant intactId="EBI-17498703">
        <id>Q9HBV2</id>
    </interactant>
    <interactant intactId="EBI-17284533">
        <id>A2A2V5</id>
        <label>SERTM1</label>
    </interactant>
    <organismsDiffer>false</organismsDiffer>
    <experiments>3</experiments>
</comment>
<comment type="interaction">
    <interactant intactId="EBI-17498703">
        <id>Q9HBV2</id>
    </interactant>
    <interactant intactId="EBI-5357343">
        <id>Q13326</id>
        <label>SGCG</label>
    </interactant>
    <organismsDiffer>false</organismsDiffer>
    <experiments>3</experiments>
</comment>
<comment type="interaction">
    <interactant intactId="EBI-17498703">
        <id>Q9HBV2</id>
    </interactant>
    <interactant intactId="EBI-10226799">
        <id>Q0VAQ4</id>
        <label>SMAGP</label>
    </interactant>
    <organismsDiffer>false</organismsDiffer>
    <experiments>3</experiments>
</comment>
<comment type="interaction">
    <interactant intactId="EBI-17498703">
        <id>Q9HBV2</id>
    </interactant>
    <interactant intactId="EBI-741850">
        <id>Q9BZL3</id>
        <label>SMIM3</label>
    </interactant>
    <organismsDiffer>false</organismsDiffer>
    <experiments>3</experiments>
</comment>
<comment type="interaction">
    <interactant intactId="EBI-17498703">
        <id>Q9HBV2</id>
    </interactant>
    <interactant intactId="EBI-311394">
        <id>Q9C0I4</id>
        <label>THSD7B</label>
    </interactant>
    <organismsDiffer>false</organismsDiffer>
    <experiments>3</experiments>
</comment>
<comment type="interaction">
    <interactant intactId="EBI-17498703">
        <id>Q9HBV2</id>
    </interactant>
    <interactant intactId="EBI-2844246">
        <id>Q9NV12</id>
        <label>TMEM140</label>
    </interactant>
    <organismsDiffer>false</organismsDiffer>
    <experiments>3</experiments>
</comment>
<comment type="interaction">
    <interactant intactId="EBI-17498703">
        <id>Q9HBV2</id>
    </interactant>
    <interactant intactId="EBI-13370320">
        <id>Q9BQJ4</id>
        <label>TMEM47</label>
    </interactant>
    <organismsDiffer>false</organismsDiffer>
    <experiments>3</experiments>
</comment>
<comment type="subcellular location">
    <subcellularLocation>
        <location evidence="5">Cytoplasmic vesicle</location>
        <location evidence="5">Secretory vesicle</location>
        <location evidence="5">Acrosome inner membrane</location>
        <topology evidence="8">Single-pass type I membrane protein</topology>
    </subcellularLocation>
    <text evidence="1 5">Primarily found in the equatorial segment of the acrosome (PubMed:11870081). The tyrosine phosphorylated protein localizes to a smaller region within the equatorial segment (By similarity). Also expressed weakly in the principal segment (PubMed:11870081).</text>
</comment>
<comment type="tissue specificity">
    <text evidence="5">Testis specific.</text>
</comment>
<comment type="PTM">
    <text evidence="2">N-glycosylated.</text>
</comment>
<comment type="disease" evidence="6">
    <disease id="DI-06752">
        <name>Spermatogenic failure 85</name>
        <acronym>SPGF85</acronym>
        <description>An autosomal recessive male infertility disorder characterized by globozoospermia and reduced progressive sperm motility.</description>
        <dbReference type="MIM" id="620490"/>
    </disease>
    <text>The disease may be caused by variants affecting the gene represented in this entry.</text>
</comment>
<sequence length="294" mass="32143">MSPRGTGCSAGLLMTVGWLLLAGLQSARGTNVTAAVQDAGLAHEGEGEEETENNDSETAENYAPPETEDVSNRNVVKEVEFGMCTVTCGIGVREVILTNGCPGGESKCVVRVEECRGPTDCGWGKPISESLESVRLACIHTSPLNRFKYMWKLLRQDQQSIILVNDSAILEVRKESHPLAFECDTLDNNEIVATIKFTVYTSSELQMRRSSLPATDAALIFVLTIGVIICVFIIFLLIFIIINWAAVKAFWGAKASTPEVQSEQSSVRYKDSTSLDQLPTEMPGEDDALSEWNE</sequence>
<protein>
    <recommendedName>
        <fullName>Sperm acrosome membrane-associated protein 1</fullName>
    </recommendedName>
    <alternativeName>
        <fullName>Sperm acrosomal membrane-associated protein 32</fullName>
    </alternativeName>
</protein>
<evidence type="ECO:0000250" key="1">
    <source>
        <dbReference type="UniProtKB" id="D5K8A9"/>
    </source>
</evidence>
<evidence type="ECO:0000250" key="2">
    <source>
        <dbReference type="UniProtKB" id="Q9DA48"/>
    </source>
</evidence>
<evidence type="ECO:0000255" key="3"/>
<evidence type="ECO:0000256" key="4">
    <source>
        <dbReference type="SAM" id="MobiDB-lite"/>
    </source>
</evidence>
<evidence type="ECO:0000269" key="5">
    <source>
    </source>
</evidence>
<evidence type="ECO:0000269" key="6">
    <source>
    </source>
</evidence>
<evidence type="ECO:0000269" key="7">
    <source>
    </source>
</evidence>
<evidence type="ECO:0000305" key="8"/>
<proteinExistence type="evidence at protein level"/>
<accession>Q9HBV2</accession>
<organism>
    <name type="scientific">Homo sapiens</name>
    <name type="common">Human</name>
    <dbReference type="NCBI Taxonomy" id="9606"/>
    <lineage>
        <taxon>Eukaryota</taxon>
        <taxon>Metazoa</taxon>
        <taxon>Chordata</taxon>
        <taxon>Craniata</taxon>
        <taxon>Vertebrata</taxon>
        <taxon>Euteleostomi</taxon>
        <taxon>Mammalia</taxon>
        <taxon>Eutheria</taxon>
        <taxon>Euarchontoglires</taxon>
        <taxon>Primates</taxon>
        <taxon>Haplorrhini</taxon>
        <taxon>Catarrhini</taxon>
        <taxon>Hominidae</taxon>
        <taxon>Homo</taxon>
    </lineage>
</organism>
<keyword id="KW-0968">Cytoplasmic vesicle</keyword>
<keyword id="KW-0903">Direct protein sequencing</keyword>
<keyword id="KW-0225">Disease variant</keyword>
<keyword id="KW-0325">Glycoprotein</keyword>
<keyword id="KW-0472">Membrane</keyword>
<keyword id="KW-0597">Phosphoprotein</keyword>
<keyword id="KW-1267">Proteomics identification</keyword>
<keyword id="KW-1185">Reference proteome</keyword>
<keyword id="KW-0732">Signal</keyword>
<keyword id="KW-0812">Transmembrane</keyword>
<keyword id="KW-1133">Transmembrane helix</keyword>
<feature type="signal peptide" evidence="3">
    <location>
        <begin position="1"/>
        <end position="29"/>
    </location>
</feature>
<feature type="chain" id="PRO_0000248152" description="Sperm acrosome membrane-associated protein 1">
    <location>
        <begin position="30"/>
        <end position="294"/>
    </location>
</feature>
<feature type="topological domain" description="Extracellular" evidence="3">
    <location>
        <begin position="30"/>
        <end position="221"/>
    </location>
</feature>
<feature type="transmembrane region" description="Helical" evidence="3">
    <location>
        <begin position="222"/>
        <end position="242"/>
    </location>
</feature>
<feature type="topological domain" description="Cytoplasmic" evidence="3">
    <location>
        <begin position="243"/>
        <end position="294"/>
    </location>
</feature>
<feature type="region of interest" description="Disordered" evidence="4">
    <location>
        <begin position="42"/>
        <end position="70"/>
    </location>
</feature>
<feature type="region of interest" description="Disordered" evidence="4">
    <location>
        <begin position="258"/>
        <end position="294"/>
    </location>
</feature>
<feature type="compositionally biased region" description="Acidic residues" evidence="4">
    <location>
        <begin position="46"/>
        <end position="58"/>
    </location>
</feature>
<feature type="compositionally biased region" description="Polar residues" evidence="4">
    <location>
        <begin position="258"/>
        <end position="267"/>
    </location>
</feature>
<feature type="compositionally biased region" description="Acidic residues" evidence="4">
    <location>
        <begin position="283"/>
        <end position="294"/>
    </location>
</feature>
<feature type="modified residue" description="Phosphoserine" evidence="5">
    <location>
        <position position="256"/>
    </location>
</feature>
<feature type="modified residue" description="Phosphotyrosine" evidence="1">
    <location>
        <position position="269"/>
    </location>
</feature>
<feature type="modified residue" description="Phosphoserine" evidence="2">
    <location>
        <position position="290"/>
    </location>
</feature>
<feature type="glycosylation site" description="N-linked (GlcNAc...) asparagine" evidence="3">
    <location>
        <position position="31"/>
    </location>
</feature>
<feature type="sequence variant" id="VAR_088971" description="In SPGF85; likely pathogenic; SPACA1 protein not detected by western blot in patient sperm." evidence="6">
    <location>
        <begin position="18"/>
        <end position="294"/>
    </location>
</feature>
<feature type="sequence variant" id="VAR_027258" description="In dbSNP:rs2276089.">
    <original>L</original>
    <variation>S</variation>
    <location>
        <position position="237"/>
    </location>
</feature>